<protein>
    <recommendedName>
        <fullName evidence="7">Wax ester synthase/diacylglycerol acyltransferase 4</fullName>
        <shortName evidence="7">WS/DGAT 4</shortName>
    </recommendedName>
    <alternativeName>
        <fullName evidence="7">Diacylglycerol O-acyltransferase WSD4</fullName>
        <ecNumber evidence="2">2.3.1.20</ecNumber>
    </alternativeName>
    <alternativeName>
        <fullName evidence="7">Long-chain-alcohol O-fatty-acyltransferase WSD4</fullName>
        <ecNumber evidence="2">2.3.1.75</ecNumber>
    </alternativeName>
</protein>
<name>WSD4_ARATH</name>
<evidence type="ECO:0000250" key="1">
    <source>
        <dbReference type="UniProtKB" id="Q5KS41"/>
    </source>
</evidence>
<evidence type="ECO:0000250" key="2">
    <source>
        <dbReference type="UniProtKB" id="Q93ZR6"/>
    </source>
</evidence>
<evidence type="ECO:0000255" key="3"/>
<evidence type="ECO:0000255" key="4">
    <source>
        <dbReference type="PROSITE-ProRule" id="PRU00498"/>
    </source>
</evidence>
<evidence type="ECO:0000256" key="5">
    <source>
        <dbReference type="SAM" id="MobiDB-lite"/>
    </source>
</evidence>
<evidence type="ECO:0000269" key="6">
    <source>
    </source>
</evidence>
<evidence type="ECO:0000303" key="7">
    <source>
    </source>
</evidence>
<evidence type="ECO:0000305" key="8"/>
<evidence type="ECO:0000312" key="9">
    <source>
        <dbReference type="Araport" id="AT3G49190"/>
    </source>
</evidence>
<evidence type="ECO:0000312" key="10">
    <source>
        <dbReference type="EMBL" id="CAB66398.1"/>
    </source>
</evidence>
<comment type="function">
    <text evidence="2">Bifunctional wax ester synthase/diacylglycerol acyltransferase (By similarity). Involved in cuticular wax biosynthesis (By similarity).</text>
</comment>
<comment type="catalytic activity">
    <reaction evidence="2">
        <text>an acyl-CoA + a 1,2-diacyl-sn-glycerol = a triacyl-sn-glycerol + CoA</text>
        <dbReference type="Rhea" id="RHEA:10868"/>
        <dbReference type="ChEBI" id="CHEBI:17815"/>
        <dbReference type="ChEBI" id="CHEBI:57287"/>
        <dbReference type="ChEBI" id="CHEBI:58342"/>
        <dbReference type="ChEBI" id="CHEBI:64615"/>
        <dbReference type="EC" id="2.3.1.20"/>
    </reaction>
</comment>
<comment type="catalytic activity">
    <reaction evidence="2">
        <text>a long chain fatty alcohol + a fatty acyl-CoA = a wax ester + CoA</text>
        <dbReference type="Rhea" id="RHEA:38443"/>
        <dbReference type="ChEBI" id="CHEBI:10036"/>
        <dbReference type="ChEBI" id="CHEBI:17135"/>
        <dbReference type="ChEBI" id="CHEBI:57287"/>
        <dbReference type="ChEBI" id="CHEBI:77636"/>
        <dbReference type="EC" id="2.3.1.75"/>
    </reaction>
</comment>
<comment type="pathway">
    <text evidence="2">Glycerolipid metabolism; triacylglycerol biosynthesis.</text>
</comment>
<comment type="pathway">
    <text evidence="2">Lipid metabolism.</text>
</comment>
<comment type="subcellular location">
    <subcellularLocation>
        <location evidence="1">Cell membrane</location>
        <topology evidence="3">Single-pass membrane protein</topology>
    </subcellularLocation>
    <subcellularLocation>
        <location evidence="2">Endoplasmic reticulum membrane</location>
        <topology evidence="3">Single-pass membrane protein</topology>
    </subcellularLocation>
</comment>
<comment type="tissue specificity">
    <text evidence="6">Mostly expressed in roots, flowers and siliques.</text>
</comment>
<comment type="induction">
    <text evidence="6">Induced in roots during drought and salt stresses, and upon abscisic acid (ABA) treatment.</text>
</comment>
<comment type="similarity">
    <text evidence="8">In the N-terminal section; belongs to the long-chain O-acyltransferase family.</text>
</comment>
<feature type="chain" id="PRO_0000452614" description="Wax ester synthase/diacylglycerol acyltransferase 4">
    <location>
        <begin position="1"/>
        <end position="522"/>
    </location>
</feature>
<feature type="topological domain" description="Cytoplasmic" evidence="8">
    <location>
        <begin position="1"/>
        <end position="205"/>
    </location>
</feature>
<feature type="transmembrane region" description="Helical" evidence="3">
    <location>
        <begin position="206"/>
        <end position="226"/>
    </location>
</feature>
<feature type="topological domain" description="Lumenal" evidence="8">
    <location>
        <begin position="227"/>
        <end position="522"/>
    </location>
</feature>
<feature type="region of interest" description="Disordered" evidence="5">
    <location>
        <begin position="1"/>
        <end position="20"/>
    </location>
</feature>
<feature type="compositionally biased region" description="Basic and acidic residues" evidence="5">
    <location>
        <begin position="1"/>
        <end position="12"/>
    </location>
</feature>
<feature type="active site" description="Proton acceptor" evidence="3">
    <location>
        <position position="149"/>
    </location>
</feature>
<feature type="glycosylation site" description="N-linked (GlcNAc...) asparagine" evidence="4">
    <location>
        <position position="270"/>
    </location>
</feature>
<feature type="glycosylation site" description="N-linked (GlcNAc...) asparagine" evidence="4">
    <location>
        <position position="409"/>
    </location>
</feature>
<proteinExistence type="evidence at transcript level"/>
<accession>Q9M3B3</accession>
<reference key="1">
    <citation type="journal article" date="2000" name="Nature">
        <title>Sequence and analysis of chromosome 3 of the plant Arabidopsis thaliana.</title>
        <authorList>
            <person name="Salanoubat M."/>
            <person name="Lemcke K."/>
            <person name="Rieger M."/>
            <person name="Ansorge W."/>
            <person name="Unseld M."/>
            <person name="Fartmann B."/>
            <person name="Valle G."/>
            <person name="Bloecker H."/>
            <person name="Perez-Alonso M."/>
            <person name="Obermaier B."/>
            <person name="Delseny M."/>
            <person name="Boutry M."/>
            <person name="Grivell L.A."/>
            <person name="Mache R."/>
            <person name="Puigdomenech P."/>
            <person name="De Simone V."/>
            <person name="Choisne N."/>
            <person name="Artiguenave F."/>
            <person name="Robert C."/>
            <person name="Brottier P."/>
            <person name="Wincker P."/>
            <person name="Cattolico L."/>
            <person name="Weissenbach J."/>
            <person name="Saurin W."/>
            <person name="Quetier F."/>
            <person name="Schaefer M."/>
            <person name="Mueller-Auer S."/>
            <person name="Gabel C."/>
            <person name="Fuchs M."/>
            <person name="Benes V."/>
            <person name="Wurmbach E."/>
            <person name="Drzonek H."/>
            <person name="Erfle H."/>
            <person name="Jordan N."/>
            <person name="Bangert S."/>
            <person name="Wiedelmann R."/>
            <person name="Kranz H."/>
            <person name="Voss H."/>
            <person name="Holland R."/>
            <person name="Brandt P."/>
            <person name="Nyakatura G."/>
            <person name="Vezzi A."/>
            <person name="D'Angelo M."/>
            <person name="Pallavicini A."/>
            <person name="Toppo S."/>
            <person name="Simionati B."/>
            <person name="Conrad A."/>
            <person name="Hornischer K."/>
            <person name="Kauer G."/>
            <person name="Loehnert T.-H."/>
            <person name="Nordsiek G."/>
            <person name="Reichelt J."/>
            <person name="Scharfe M."/>
            <person name="Schoen O."/>
            <person name="Bargues M."/>
            <person name="Terol J."/>
            <person name="Climent J."/>
            <person name="Navarro P."/>
            <person name="Collado C."/>
            <person name="Perez-Perez A."/>
            <person name="Ottenwaelder B."/>
            <person name="Duchemin D."/>
            <person name="Cooke R."/>
            <person name="Laudie M."/>
            <person name="Berger-Llauro C."/>
            <person name="Purnelle B."/>
            <person name="Masuy D."/>
            <person name="de Haan M."/>
            <person name="Maarse A.C."/>
            <person name="Alcaraz J.-P."/>
            <person name="Cottet A."/>
            <person name="Casacuberta E."/>
            <person name="Monfort A."/>
            <person name="Argiriou A."/>
            <person name="Flores M."/>
            <person name="Liguori R."/>
            <person name="Vitale D."/>
            <person name="Mannhaupt G."/>
            <person name="Haase D."/>
            <person name="Schoof H."/>
            <person name="Rudd S."/>
            <person name="Zaccaria P."/>
            <person name="Mewes H.-W."/>
            <person name="Mayer K.F.X."/>
            <person name="Kaul S."/>
            <person name="Town C.D."/>
            <person name="Koo H.L."/>
            <person name="Tallon L.J."/>
            <person name="Jenkins J."/>
            <person name="Rooney T."/>
            <person name="Rizzo M."/>
            <person name="Walts A."/>
            <person name="Utterback T."/>
            <person name="Fujii C.Y."/>
            <person name="Shea T.P."/>
            <person name="Creasy T.H."/>
            <person name="Haas B."/>
            <person name="Maiti R."/>
            <person name="Wu D."/>
            <person name="Peterson J."/>
            <person name="Van Aken S."/>
            <person name="Pai G."/>
            <person name="Militscher J."/>
            <person name="Sellers P."/>
            <person name="Gill J.E."/>
            <person name="Feldblyum T.V."/>
            <person name="Preuss D."/>
            <person name="Lin X."/>
            <person name="Nierman W.C."/>
            <person name="Salzberg S.L."/>
            <person name="White O."/>
            <person name="Venter J.C."/>
            <person name="Fraser C.M."/>
            <person name="Kaneko T."/>
            <person name="Nakamura Y."/>
            <person name="Sato S."/>
            <person name="Kato T."/>
            <person name="Asamizu E."/>
            <person name="Sasamoto S."/>
            <person name="Kimura T."/>
            <person name="Idesawa K."/>
            <person name="Kawashima K."/>
            <person name="Kishida Y."/>
            <person name="Kiyokawa C."/>
            <person name="Kohara M."/>
            <person name="Matsumoto M."/>
            <person name="Matsuno A."/>
            <person name="Muraki A."/>
            <person name="Nakayama S."/>
            <person name="Nakazaki N."/>
            <person name="Shinpo S."/>
            <person name="Takeuchi C."/>
            <person name="Wada T."/>
            <person name="Watanabe A."/>
            <person name="Yamada M."/>
            <person name="Yasuda M."/>
            <person name="Tabata S."/>
        </authorList>
    </citation>
    <scope>NUCLEOTIDE SEQUENCE [LARGE SCALE GENOMIC DNA]</scope>
    <source>
        <strain>cv. Columbia</strain>
    </source>
</reference>
<reference key="2">
    <citation type="journal article" date="2017" name="Plant J.">
        <title>Araport11: a complete reannotation of the Arabidopsis thaliana reference genome.</title>
        <authorList>
            <person name="Cheng C.Y."/>
            <person name="Krishnakumar V."/>
            <person name="Chan A.P."/>
            <person name="Thibaud-Nissen F."/>
            <person name="Schobel S."/>
            <person name="Town C.D."/>
        </authorList>
    </citation>
    <scope>GENOME REANNOTATION</scope>
    <source>
        <strain>cv. Columbia</strain>
    </source>
</reference>
<reference key="3">
    <citation type="journal article" date="2002" name="Science">
        <title>Functional annotation of a full-length Arabidopsis cDNA collection.</title>
        <authorList>
            <person name="Seki M."/>
            <person name="Narusaka M."/>
            <person name="Kamiya A."/>
            <person name="Ishida J."/>
            <person name="Satou M."/>
            <person name="Sakurai T."/>
            <person name="Nakajima M."/>
            <person name="Enju A."/>
            <person name="Akiyama K."/>
            <person name="Oono Y."/>
            <person name="Muramatsu M."/>
            <person name="Hayashizaki Y."/>
            <person name="Kawai J."/>
            <person name="Carninci P."/>
            <person name="Itoh M."/>
            <person name="Ishii Y."/>
            <person name="Arakawa T."/>
            <person name="Shibata K."/>
            <person name="Shinagawa A."/>
            <person name="Shinozaki K."/>
        </authorList>
    </citation>
    <scope>NUCLEOTIDE SEQUENCE [LARGE SCALE MRNA]</scope>
    <source>
        <strain>cv. Columbia</strain>
    </source>
</reference>
<reference key="4">
    <citation type="journal article" date="2003" name="Science">
        <title>Empirical analysis of transcriptional activity in the Arabidopsis genome.</title>
        <authorList>
            <person name="Yamada K."/>
            <person name="Lim J."/>
            <person name="Dale J.M."/>
            <person name="Chen H."/>
            <person name="Shinn P."/>
            <person name="Palm C.J."/>
            <person name="Southwick A.M."/>
            <person name="Wu H.C."/>
            <person name="Kim C.J."/>
            <person name="Nguyen M."/>
            <person name="Pham P.K."/>
            <person name="Cheuk R.F."/>
            <person name="Karlin-Newmann G."/>
            <person name="Liu S.X."/>
            <person name="Lam B."/>
            <person name="Sakano H."/>
            <person name="Wu T."/>
            <person name="Yu G."/>
            <person name="Miranda M."/>
            <person name="Quach H.L."/>
            <person name="Tripp M."/>
            <person name="Chang C.H."/>
            <person name="Lee J.M."/>
            <person name="Toriumi M.J."/>
            <person name="Chan M.M."/>
            <person name="Tang C.C."/>
            <person name="Onodera C.S."/>
            <person name="Deng J.M."/>
            <person name="Akiyama K."/>
            <person name="Ansari Y."/>
            <person name="Arakawa T."/>
            <person name="Banh J."/>
            <person name="Banno F."/>
            <person name="Bowser L."/>
            <person name="Brooks S.Y."/>
            <person name="Carninci P."/>
            <person name="Chao Q."/>
            <person name="Choy N."/>
            <person name="Enju A."/>
            <person name="Goldsmith A.D."/>
            <person name="Gurjal M."/>
            <person name="Hansen N.F."/>
            <person name="Hayashizaki Y."/>
            <person name="Johnson-Hopson C."/>
            <person name="Hsuan V.W."/>
            <person name="Iida K."/>
            <person name="Karnes M."/>
            <person name="Khan S."/>
            <person name="Koesema E."/>
            <person name="Ishida J."/>
            <person name="Jiang P.X."/>
            <person name="Jones T."/>
            <person name="Kawai J."/>
            <person name="Kamiya A."/>
            <person name="Meyers C."/>
            <person name="Nakajima M."/>
            <person name="Narusaka M."/>
            <person name="Seki M."/>
            <person name="Sakurai T."/>
            <person name="Satou M."/>
            <person name="Tamse R."/>
            <person name="Vaysberg M."/>
            <person name="Wallender E.K."/>
            <person name="Wong C."/>
            <person name="Yamamura Y."/>
            <person name="Yuan S."/>
            <person name="Shinozaki K."/>
            <person name="Davis R.W."/>
            <person name="Theologis A."/>
            <person name="Ecker J.R."/>
        </authorList>
    </citation>
    <scope>NUCLEOTIDE SEQUENCE [LARGE SCALE MRNA]</scope>
    <source>
        <strain>cv. Columbia</strain>
    </source>
</reference>
<reference key="5">
    <citation type="journal article" date="2003" name="J. Biol. Chem.">
        <title>A novel bifunctional wax ester synthase/acyl-CoA:diacylglycerol acyltransferase mediates wax ester and triacylglycerol biosynthesis in Acinetobacter calcoaceticus ADP1.</title>
        <authorList>
            <person name="Kalscheuer R."/>
            <person name="Steinbuchel A."/>
        </authorList>
    </citation>
    <scope>GENE FAMILY</scope>
</reference>
<reference key="6">
    <citation type="journal article" date="2008" name="Plant Physiol.">
        <title>Identification of the wax ester synthase/acyl-coenzyme A: diacylglycerol acyltransferase WSD1 required for stem wax ester biosynthesis in Arabidopsis.</title>
        <authorList>
            <person name="Li F."/>
            <person name="Wu X."/>
            <person name="Lam P."/>
            <person name="Bird D."/>
            <person name="Zheng H."/>
            <person name="Samuels A.L."/>
            <person name="Jetter R."/>
            <person name="Kunst L."/>
        </authorList>
    </citation>
    <scope>GENE FAMILY</scope>
    <scope>NOMENCLATURE</scope>
</reference>
<reference key="7">
    <citation type="journal article" date="2013" name="Arabidopsis Book">
        <title>Acyl-lipid metabolism.</title>
        <authorList>
            <person name="Li-Beisson Y."/>
            <person name="Shorrosh B."/>
            <person name="Beisson F."/>
            <person name="Andersson M.X."/>
            <person name="Arondel V."/>
            <person name="Bates P.D."/>
            <person name="Baud S."/>
            <person name="Bird D."/>
            <person name="Debono A."/>
            <person name="Durrett T.P."/>
            <person name="Franke R.B."/>
            <person name="Graham I.A."/>
            <person name="Katayama K."/>
            <person name="Kelly A.A."/>
            <person name="Larson T."/>
            <person name="Markham J.E."/>
            <person name="Miquel M."/>
            <person name="Molina I."/>
            <person name="Nishida I."/>
            <person name="Rowland O."/>
            <person name="Samuels L."/>
            <person name="Schmid K.M."/>
            <person name="Wada H."/>
            <person name="Welti R."/>
            <person name="Xu C."/>
            <person name="Zallot R."/>
            <person name="Ohlrogge J."/>
        </authorList>
    </citation>
    <scope>REVIEW ON ACYL-LIPID METABOLISM</scope>
</reference>
<reference key="8">
    <citation type="journal article" date="2019" name="Plant J.">
        <title>Surface wax esters contribute to drought tolerance in Arabidopsis.</title>
        <authorList>
            <person name="Patwari P."/>
            <person name="Salewski V."/>
            <person name="Gutbrod K."/>
            <person name="Kreszies T."/>
            <person name="Dresen-Scholz B."/>
            <person name="Peisker H."/>
            <person name="Steiner U."/>
            <person name="Meyer A.J."/>
            <person name="Schreiber L."/>
            <person name="Doermann P."/>
        </authorList>
    </citation>
    <scope>TISSUE SPECIFICITY</scope>
    <scope>INDUCTION BY DROUGHT; SALT AND ABSCISIC ACID</scope>
    <source>
        <strain>cv. Columbia</strain>
    </source>
</reference>
<dbReference type="EC" id="2.3.1.20" evidence="2"/>
<dbReference type="EC" id="2.3.1.75" evidence="2"/>
<dbReference type="EMBL" id="AL132956">
    <property type="protein sequence ID" value="CAB66398.1"/>
    <property type="molecule type" value="Genomic_DNA"/>
</dbReference>
<dbReference type="EMBL" id="CP002686">
    <property type="protein sequence ID" value="AEE78509.1"/>
    <property type="molecule type" value="Genomic_DNA"/>
</dbReference>
<dbReference type="EMBL" id="AK117581">
    <property type="protein sequence ID" value="BAC42239.1"/>
    <property type="molecule type" value="mRNA"/>
</dbReference>
<dbReference type="EMBL" id="BT005436">
    <property type="protein sequence ID" value="AAO63856.1"/>
    <property type="molecule type" value="mRNA"/>
</dbReference>
<dbReference type="PIR" id="T45824">
    <property type="entry name" value="T45824"/>
</dbReference>
<dbReference type="RefSeq" id="NP_190488.1">
    <property type="nucleotide sequence ID" value="NM_114778.4"/>
</dbReference>
<dbReference type="SMR" id="Q9M3B3"/>
<dbReference type="IntAct" id="Q9M3B3">
    <property type="interactions" value="23"/>
</dbReference>
<dbReference type="STRING" id="3702.Q9M3B3"/>
<dbReference type="GlyCosmos" id="Q9M3B3">
    <property type="glycosylation" value="2 sites, No reported glycans"/>
</dbReference>
<dbReference type="GlyGen" id="Q9M3B3">
    <property type="glycosylation" value="2 sites"/>
</dbReference>
<dbReference type="iPTMnet" id="Q9M3B3"/>
<dbReference type="PaxDb" id="3702-AT3G49190.1"/>
<dbReference type="ProteomicsDB" id="181159"/>
<dbReference type="EnsemblPlants" id="AT3G49190.1">
    <property type="protein sequence ID" value="AT3G49190.1"/>
    <property type="gene ID" value="AT3G49190"/>
</dbReference>
<dbReference type="GeneID" id="824080"/>
<dbReference type="Gramene" id="AT3G49190.1">
    <property type="protein sequence ID" value="AT3G49190.1"/>
    <property type="gene ID" value="AT3G49190"/>
</dbReference>
<dbReference type="KEGG" id="ath:AT3G49190"/>
<dbReference type="Araport" id="AT3G49190"/>
<dbReference type="TAIR" id="AT3G49190"/>
<dbReference type="eggNOG" id="ENOG502QTZ2">
    <property type="taxonomic scope" value="Eukaryota"/>
</dbReference>
<dbReference type="HOGENOM" id="CLU_027831_0_0_1"/>
<dbReference type="InParanoid" id="Q9M3B3"/>
<dbReference type="OMA" id="HNDLKWG"/>
<dbReference type="PhylomeDB" id="Q9M3B3"/>
<dbReference type="UniPathway" id="UPA00282"/>
<dbReference type="PRO" id="PR:Q9M3B3"/>
<dbReference type="Proteomes" id="UP000006548">
    <property type="component" value="Chromosome 3"/>
</dbReference>
<dbReference type="ExpressionAtlas" id="Q9M3B3">
    <property type="expression patterns" value="baseline and differential"/>
</dbReference>
<dbReference type="GO" id="GO:0005789">
    <property type="term" value="C:endoplasmic reticulum membrane"/>
    <property type="evidence" value="ECO:0007669"/>
    <property type="project" value="UniProtKB-SubCell"/>
</dbReference>
<dbReference type="GO" id="GO:0005886">
    <property type="term" value="C:plasma membrane"/>
    <property type="evidence" value="ECO:0007669"/>
    <property type="project" value="UniProtKB-SubCell"/>
</dbReference>
<dbReference type="GO" id="GO:0004144">
    <property type="term" value="F:diacylglycerol O-acyltransferase activity"/>
    <property type="evidence" value="ECO:0007669"/>
    <property type="project" value="UniProtKB-EC"/>
</dbReference>
<dbReference type="GO" id="GO:0047196">
    <property type="term" value="F:long-chain-alcohol O-fatty-acyltransferase activity"/>
    <property type="evidence" value="ECO:0007669"/>
    <property type="project" value="UniProtKB-EC"/>
</dbReference>
<dbReference type="GO" id="GO:0009737">
    <property type="term" value="P:response to abscisic acid"/>
    <property type="evidence" value="ECO:0000270"/>
    <property type="project" value="UniProtKB"/>
</dbReference>
<dbReference type="GO" id="GO:0009651">
    <property type="term" value="P:response to salt stress"/>
    <property type="evidence" value="ECO:0000270"/>
    <property type="project" value="UniProtKB"/>
</dbReference>
<dbReference type="GO" id="GO:0009414">
    <property type="term" value="P:response to water deprivation"/>
    <property type="evidence" value="ECO:0000270"/>
    <property type="project" value="UniProtKB"/>
</dbReference>
<dbReference type="GO" id="GO:0019432">
    <property type="term" value="P:triglyceride biosynthetic process"/>
    <property type="evidence" value="ECO:0007669"/>
    <property type="project" value="UniProtKB-UniPathway"/>
</dbReference>
<dbReference type="FunFam" id="3.30.559.10:FF:000033">
    <property type="entry name" value="O-acyltransferase (WSD1-like) family protein"/>
    <property type="match status" value="1"/>
</dbReference>
<dbReference type="Gene3D" id="3.30.559.10">
    <property type="entry name" value="Chloramphenicol acetyltransferase-like domain"/>
    <property type="match status" value="1"/>
</dbReference>
<dbReference type="InterPro" id="IPR023213">
    <property type="entry name" value="CAT-like_dom_sf"/>
</dbReference>
<dbReference type="InterPro" id="IPR045034">
    <property type="entry name" value="O-acyltransferase_WSD1-like"/>
</dbReference>
<dbReference type="InterPro" id="IPR009721">
    <property type="entry name" value="O-acyltransferase_WSD1_C"/>
</dbReference>
<dbReference type="InterPro" id="IPR004255">
    <property type="entry name" value="O-acyltransferase_WSD1_N"/>
</dbReference>
<dbReference type="PANTHER" id="PTHR31650">
    <property type="entry name" value="O-ACYLTRANSFERASE (WSD1-LIKE) FAMILY PROTEIN"/>
    <property type="match status" value="1"/>
</dbReference>
<dbReference type="PANTHER" id="PTHR31650:SF1">
    <property type="entry name" value="WAX ESTER SYNTHASE_DIACYLGLYCEROL ACYLTRANSFERASE 4-RELATED"/>
    <property type="match status" value="1"/>
</dbReference>
<dbReference type="Pfam" id="PF06974">
    <property type="entry name" value="WS_DGAT_C"/>
    <property type="match status" value="1"/>
</dbReference>
<dbReference type="Pfam" id="PF03007">
    <property type="entry name" value="WS_DGAT_cat"/>
    <property type="match status" value="1"/>
</dbReference>
<dbReference type="SUPFAM" id="SSF52777">
    <property type="entry name" value="CoA-dependent acyltransferases"/>
    <property type="match status" value="1"/>
</dbReference>
<gene>
    <name evidence="7" type="primary">WSD4</name>
    <name evidence="9" type="ordered locus">At3g49190</name>
    <name evidence="10" type="ORF">F2K15.50</name>
</gene>
<organism>
    <name type="scientific">Arabidopsis thaliana</name>
    <name type="common">Mouse-ear cress</name>
    <dbReference type="NCBI Taxonomy" id="3702"/>
    <lineage>
        <taxon>Eukaryota</taxon>
        <taxon>Viridiplantae</taxon>
        <taxon>Streptophyta</taxon>
        <taxon>Embryophyta</taxon>
        <taxon>Tracheophyta</taxon>
        <taxon>Spermatophyta</taxon>
        <taxon>Magnoliopsida</taxon>
        <taxon>eudicotyledons</taxon>
        <taxon>Gunneridae</taxon>
        <taxon>Pentapetalae</taxon>
        <taxon>rosids</taxon>
        <taxon>malvids</taxon>
        <taxon>Brassicales</taxon>
        <taxon>Brassicaceae</taxon>
        <taxon>Camelineae</taxon>
        <taxon>Arabidopsis</taxon>
    </lineage>
</organism>
<sequence>MEIETRPHISGDEKEEEQPLSPAARLFHAPEFNCNIISVIGFKSKLDPCVFIRGFKESFIRHPRFSSKLVTDENGQNQRWVRTNVVVEDHFIVPKIKPQNIENSNAFLEDYVSDLMKIPLDTSRPLWELHLLDLKTSDAENVAVLKIHHSVGDGMSIMSLVLACMRKTSNPDELPSLPYQYRSSSRSSLLTTGSRSDSRLLWLVKVIWTAVILGLNTVCDALEFIVTTLFVKDTETPIKGDFLSTKSKQLRLVHRTVSLDDIKLTKNAMNMTINDVVLGVTQAGLSRYLARRYGEEETKNRKQKKLPKRIRLRSALLVNLRPTTGIQDLADMMEKGSKCRWGNWFGYVVFPFSIALRDDPLEHLEIAQKTISRKKNSYGAMLTYIFCRIIVKLLGIKVAASIINRMVSNTTMTFSNMVGPVEEVSFYGHPITYFASSAYGHPHALTIHCQSYMNKMTITLIVDPTVISDPHRLCDDWEESLRSIKAAVTKRESLRLWDYLRILHNRVAWLLYQIAGLLYRML</sequence>
<keyword id="KW-0012">Acyltransferase</keyword>
<keyword id="KW-1003">Cell membrane</keyword>
<keyword id="KW-0256">Endoplasmic reticulum</keyword>
<keyword id="KW-0325">Glycoprotein</keyword>
<keyword id="KW-0472">Membrane</keyword>
<keyword id="KW-1185">Reference proteome</keyword>
<keyword id="KW-0346">Stress response</keyword>
<keyword id="KW-0808">Transferase</keyword>
<keyword id="KW-0812">Transmembrane</keyword>
<keyword id="KW-1133">Transmembrane helix</keyword>